<gene>
    <name type="primary">Fuca1</name>
    <name type="synonym">Fuca</name>
</gene>
<reference key="1">
    <citation type="journal article" date="2005" name="Science">
        <title>The transcriptional landscape of the mammalian genome.</title>
        <authorList>
            <person name="Carninci P."/>
            <person name="Kasukawa T."/>
            <person name="Katayama S."/>
            <person name="Gough J."/>
            <person name="Frith M.C."/>
            <person name="Maeda N."/>
            <person name="Oyama R."/>
            <person name="Ravasi T."/>
            <person name="Lenhard B."/>
            <person name="Wells C."/>
            <person name="Kodzius R."/>
            <person name="Shimokawa K."/>
            <person name="Bajic V.B."/>
            <person name="Brenner S.E."/>
            <person name="Batalov S."/>
            <person name="Forrest A.R."/>
            <person name="Zavolan M."/>
            <person name="Davis M.J."/>
            <person name="Wilming L.G."/>
            <person name="Aidinis V."/>
            <person name="Allen J.E."/>
            <person name="Ambesi-Impiombato A."/>
            <person name="Apweiler R."/>
            <person name="Aturaliya R.N."/>
            <person name="Bailey T.L."/>
            <person name="Bansal M."/>
            <person name="Baxter L."/>
            <person name="Beisel K.W."/>
            <person name="Bersano T."/>
            <person name="Bono H."/>
            <person name="Chalk A.M."/>
            <person name="Chiu K.P."/>
            <person name="Choudhary V."/>
            <person name="Christoffels A."/>
            <person name="Clutterbuck D.R."/>
            <person name="Crowe M.L."/>
            <person name="Dalla E."/>
            <person name="Dalrymple B.P."/>
            <person name="de Bono B."/>
            <person name="Della Gatta G."/>
            <person name="di Bernardo D."/>
            <person name="Down T."/>
            <person name="Engstrom P."/>
            <person name="Fagiolini M."/>
            <person name="Faulkner G."/>
            <person name="Fletcher C.F."/>
            <person name="Fukushima T."/>
            <person name="Furuno M."/>
            <person name="Futaki S."/>
            <person name="Gariboldi M."/>
            <person name="Georgii-Hemming P."/>
            <person name="Gingeras T.R."/>
            <person name="Gojobori T."/>
            <person name="Green R.E."/>
            <person name="Gustincich S."/>
            <person name="Harbers M."/>
            <person name="Hayashi Y."/>
            <person name="Hensch T.K."/>
            <person name="Hirokawa N."/>
            <person name="Hill D."/>
            <person name="Huminiecki L."/>
            <person name="Iacono M."/>
            <person name="Ikeo K."/>
            <person name="Iwama A."/>
            <person name="Ishikawa T."/>
            <person name="Jakt M."/>
            <person name="Kanapin A."/>
            <person name="Katoh M."/>
            <person name="Kawasawa Y."/>
            <person name="Kelso J."/>
            <person name="Kitamura H."/>
            <person name="Kitano H."/>
            <person name="Kollias G."/>
            <person name="Krishnan S.P."/>
            <person name="Kruger A."/>
            <person name="Kummerfeld S.K."/>
            <person name="Kurochkin I.V."/>
            <person name="Lareau L.F."/>
            <person name="Lazarevic D."/>
            <person name="Lipovich L."/>
            <person name="Liu J."/>
            <person name="Liuni S."/>
            <person name="McWilliam S."/>
            <person name="Madan Babu M."/>
            <person name="Madera M."/>
            <person name="Marchionni L."/>
            <person name="Matsuda H."/>
            <person name="Matsuzawa S."/>
            <person name="Miki H."/>
            <person name="Mignone F."/>
            <person name="Miyake S."/>
            <person name="Morris K."/>
            <person name="Mottagui-Tabar S."/>
            <person name="Mulder N."/>
            <person name="Nakano N."/>
            <person name="Nakauchi H."/>
            <person name="Ng P."/>
            <person name="Nilsson R."/>
            <person name="Nishiguchi S."/>
            <person name="Nishikawa S."/>
            <person name="Nori F."/>
            <person name="Ohara O."/>
            <person name="Okazaki Y."/>
            <person name="Orlando V."/>
            <person name="Pang K.C."/>
            <person name="Pavan W.J."/>
            <person name="Pavesi G."/>
            <person name="Pesole G."/>
            <person name="Petrovsky N."/>
            <person name="Piazza S."/>
            <person name="Reed J."/>
            <person name="Reid J.F."/>
            <person name="Ring B.Z."/>
            <person name="Ringwald M."/>
            <person name="Rost B."/>
            <person name="Ruan Y."/>
            <person name="Salzberg S.L."/>
            <person name="Sandelin A."/>
            <person name="Schneider C."/>
            <person name="Schoenbach C."/>
            <person name="Sekiguchi K."/>
            <person name="Semple C.A."/>
            <person name="Seno S."/>
            <person name="Sessa L."/>
            <person name="Sheng Y."/>
            <person name="Shibata Y."/>
            <person name="Shimada H."/>
            <person name="Shimada K."/>
            <person name="Silva D."/>
            <person name="Sinclair B."/>
            <person name="Sperling S."/>
            <person name="Stupka E."/>
            <person name="Sugiura K."/>
            <person name="Sultana R."/>
            <person name="Takenaka Y."/>
            <person name="Taki K."/>
            <person name="Tammoja K."/>
            <person name="Tan S.L."/>
            <person name="Tang S."/>
            <person name="Taylor M.S."/>
            <person name="Tegner J."/>
            <person name="Teichmann S.A."/>
            <person name="Ueda H.R."/>
            <person name="van Nimwegen E."/>
            <person name="Verardo R."/>
            <person name="Wei C.L."/>
            <person name="Yagi K."/>
            <person name="Yamanishi H."/>
            <person name="Zabarovsky E."/>
            <person name="Zhu S."/>
            <person name="Zimmer A."/>
            <person name="Hide W."/>
            <person name="Bult C."/>
            <person name="Grimmond S.M."/>
            <person name="Teasdale R.D."/>
            <person name="Liu E.T."/>
            <person name="Brusic V."/>
            <person name="Quackenbush J."/>
            <person name="Wahlestedt C."/>
            <person name="Mattick J.S."/>
            <person name="Hume D.A."/>
            <person name="Kai C."/>
            <person name="Sasaki D."/>
            <person name="Tomaru Y."/>
            <person name="Fukuda S."/>
            <person name="Kanamori-Katayama M."/>
            <person name="Suzuki M."/>
            <person name="Aoki J."/>
            <person name="Arakawa T."/>
            <person name="Iida J."/>
            <person name="Imamura K."/>
            <person name="Itoh M."/>
            <person name="Kato T."/>
            <person name="Kawaji H."/>
            <person name="Kawagashira N."/>
            <person name="Kawashima T."/>
            <person name="Kojima M."/>
            <person name="Kondo S."/>
            <person name="Konno H."/>
            <person name="Nakano K."/>
            <person name="Ninomiya N."/>
            <person name="Nishio T."/>
            <person name="Okada M."/>
            <person name="Plessy C."/>
            <person name="Shibata K."/>
            <person name="Shiraki T."/>
            <person name="Suzuki S."/>
            <person name="Tagami M."/>
            <person name="Waki K."/>
            <person name="Watahiki A."/>
            <person name="Okamura-Oho Y."/>
            <person name="Suzuki H."/>
            <person name="Kawai J."/>
            <person name="Hayashizaki Y."/>
        </authorList>
    </citation>
    <scope>NUCLEOTIDE SEQUENCE [LARGE SCALE MRNA]</scope>
    <source>
        <strain>BALB/cJ</strain>
        <strain>C57BL/6J</strain>
        <tissue>Bone marrow</tissue>
        <tissue>Colon</tissue>
        <tissue>Eye</tissue>
        <tissue>Kidney</tissue>
    </source>
</reference>
<reference key="2">
    <citation type="journal article" date="2009" name="PLoS Biol.">
        <title>Lineage-specific biology revealed by a finished genome assembly of the mouse.</title>
        <authorList>
            <person name="Church D.M."/>
            <person name="Goodstadt L."/>
            <person name="Hillier L.W."/>
            <person name="Zody M.C."/>
            <person name="Goldstein S."/>
            <person name="She X."/>
            <person name="Bult C.J."/>
            <person name="Agarwala R."/>
            <person name="Cherry J.L."/>
            <person name="DiCuccio M."/>
            <person name="Hlavina W."/>
            <person name="Kapustin Y."/>
            <person name="Meric P."/>
            <person name="Maglott D."/>
            <person name="Birtle Z."/>
            <person name="Marques A.C."/>
            <person name="Graves T."/>
            <person name="Zhou S."/>
            <person name="Teague B."/>
            <person name="Potamousis K."/>
            <person name="Churas C."/>
            <person name="Place M."/>
            <person name="Herschleb J."/>
            <person name="Runnheim R."/>
            <person name="Forrest D."/>
            <person name="Amos-Landgraf J."/>
            <person name="Schwartz D.C."/>
            <person name="Cheng Z."/>
            <person name="Lindblad-Toh K."/>
            <person name="Eichler E.E."/>
            <person name="Ponting C.P."/>
        </authorList>
    </citation>
    <scope>NUCLEOTIDE SEQUENCE [LARGE SCALE GENOMIC DNA]</scope>
    <source>
        <strain>C57BL/6J</strain>
    </source>
</reference>
<reference key="3">
    <citation type="journal article" date="2004" name="Genome Res.">
        <title>The status, quality, and expansion of the NIH full-length cDNA project: the Mammalian Gene Collection (MGC).</title>
        <authorList>
            <consortium name="The MGC Project Team"/>
        </authorList>
    </citation>
    <scope>NUCLEOTIDE SEQUENCE [LARGE SCALE MRNA]</scope>
    <source>
        <strain>FVB/N</strain>
        <tissue>Mammary tumor</tissue>
    </source>
</reference>
<reference key="4">
    <citation type="journal article" date="2010" name="Cell">
        <title>A tissue-specific atlas of mouse protein phosphorylation and expression.</title>
        <authorList>
            <person name="Huttlin E.L."/>
            <person name="Jedrychowski M.P."/>
            <person name="Elias J.E."/>
            <person name="Goswami T."/>
            <person name="Rad R."/>
            <person name="Beausoleil S.A."/>
            <person name="Villen J."/>
            <person name="Haas W."/>
            <person name="Sowa M.E."/>
            <person name="Gygi S.P."/>
        </authorList>
    </citation>
    <scope>IDENTIFICATION BY MASS SPECTROMETRY [LARGE SCALE ANALYSIS]</scope>
    <source>
        <tissue>Testis</tissue>
    </source>
</reference>
<organism>
    <name type="scientific">Mus musculus</name>
    <name type="common">Mouse</name>
    <dbReference type="NCBI Taxonomy" id="10090"/>
    <lineage>
        <taxon>Eukaryota</taxon>
        <taxon>Metazoa</taxon>
        <taxon>Chordata</taxon>
        <taxon>Craniata</taxon>
        <taxon>Vertebrata</taxon>
        <taxon>Euteleostomi</taxon>
        <taxon>Mammalia</taxon>
        <taxon>Eutheria</taxon>
        <taxon>Euarchontoglires</taxon>
        <taxon>Glires</taxon>
        <taxon>Rodentia</taxon>
        <taxon>Myomorpha</taxon>
        <taxon>Muroidea</taxon>
        <taxon>Muridae</taxon>
        <taxon>Murinae</taxon>
        <taxon>Mus</taxon>
        <taxon>Mus</taxon>
    </lineage>
</organism>
<sequence length="452" mass="52281">MLLLLLLLLVAAAQAVALAPRRFTPDWQSLDSRPLPSWFDEAKFGVFVHWGVFSVPAWGSEWFWWHWQGDRMPAYQRFMTENYPPGFSYADFAPQFTARFFHPDQWAELFQAAGAKYVVLTTKHHEGFTNWPSPVSWNWNSKDVGPHRDLVGELGAAVRKRNIRYGLYHSLLEWFHPLYLLDKKNGFKTQHFVRAKTMPELYDLVNSYKPDLIWSDGEWECPDTYWNSTSFLAWLYNDSPVKDEVIVNDRWGQNCSCHHGGYYNCQDKYKPQSLPDHKWEMCTSMDRASWGYRKDMTMSTIAKENEIIEELVQTVSLGGNYLLNIGPTKDGLIVPIFQERLLAVGKWLQINGEAIYASKPWRVQSEKNKTVVWYTTKNATVYATFLYWPENGIVNLKSPKTTSATKITMLGLEGDLSWTQDPLEGVLISLPQLPPTVLPVEFAWTLKLTKVN</sequence>
<comment type="function">
    <text evidence="1">Alpha-L-fucosidase is responsible for hydrolyzing the alpha-1,6-linked fucose joined to the reducing-end N-acetylglucosamine of the carbohydrate moieties of glycoproteins.</text>
</comment>
<comment type="catalytic activity">
    <reaction evidence="4">
        <text>an alpha-L-fucoside + H2O = L-fucose + an alcohol</text>
        <dbReference type="Rhea" id="RHEA:12288"/>
        <dbReference type="ChEBI" id="CHEBI:2181"/>
        <dbReference type="ChEBI" id="CHEBI:15377"/>
        <dbReference type="ChEBI" id="CHEBI:28349"/>
        <dbReference type="ChEBI" id="CHEBI:30879"/>
        <dbReference type="EC" id="3.2.1.51"/>
    </reaction>
</comment>
<comment type="catalytic activity">
    <reaction evidence="2">
        <text>a neolactoside IV(2)-alpha-Fuc-nLc4Cer(d18:1(4E)) + H2O = a neolactoside nLc4Cer(d18:1(4E)) + L-fucose</text>
        <dbReference type="Rhea" id="RHEA:48224"/>
        <dbReference type="ChEBI" id="CHEBI:2181"/>
        <dbReference type="ChEBI" id="CHEBI:15377"/>
        <dbReference type="ChEBI" id="CHEBI:17006"/>
        <dbReference type="ChEBI" id="CHEBI:28691"/>
    </reaction>
    <physiologicalReaction direction="left-to-right" evidence="2">
        <dbReference type="Rhea" id="RHEA:48225"/>
    </physiologicalReaction>
</comment>
<comment type="catalytic activity">
    <reaction evidence="2">
        <text>a neolactoside IV(2)-alpha-Fuc-nLc4Cer(d18:0) + H2O = a neolactoside nLc4Cer(d18:0) + L-fucose</text>
        <dbReference type="Rhea" id="RHEA:49308"/>
        <dbReference type="ChEBI" id="CHEBI:2181"/>
        <dbReference type="ChEBI" id="CHEBI:15377"/>
        <dbReference type="ChEBI" id="CHEBI:91119"/>
        <dbReference type="ChEBI" id="CHEBI:91121"/>
    </reaction>
    <physiologicalReaction direction="left-to-right" evidence="2">
        <dbReference type="Rhea" id="RHEA:49309"/>
    </physiologicalReaction>
</comment>
<comment type="subunit">
    <text evidence="1">Homotetramer.</text>
</comment>
<comment type="subcellular location">
    <subcellularLocation>
        <location evidence="2">Lysosome</location>
    </subcellularLocation>
</comment>
<comment type="similarity">
    <text evidence="5">Belongs to the glycosyl hydrolase 29 family.</text>
</comment>
<feature type="signal peptide" evidence="3">
    <location>
        <begin position="1"/>
        <end position="17"/>
    </location>
</feature>
<feature type="chain" id="PRO_0000010310" description="Tissue alpha-L-fucosidase">
    <location>
        <begin position="18"/>
        <end position="452"/>
    </location>
</feature>
<feature type="site" description="May be important for catalysis" evidence="4">
    <location>
        <position position="282"/>
    </location>
</feature>
<feature type="glycosylation site" description="N-linked (GlcNAc...) asparagine" evidence="3">
    <location>
        <position position="227"/>
    </location>
</feature>
<feature type="glycosylation site" description="N-linked (GlcNAc...) asparagine" evidence="3">
    <location>
        <position position="254"/>
    </location>
</feature>
<feature type="glycosylation site" description="N-linked (GlcNAc...) asparagine" evidence="3">
    <location>
        <position position="368"/>
    </location>
</feature>
<feature type="glycosylation site" description="N-linked (GlcNAc...) asparagine" evidence="3">
    <location>
        <position position="378"/>
    </location>
</feature>
<feature type="sequence conflict" description="In Ref. 1; BAC41012." evidence="5" ref="1">
    <original>A</original>
    <variation>T</variation>
    <location>
        <position position="379"/>
    </location>
</feature>
<feature type="sequence conflict" description="In Ref. 1; BAB21949." evidence="5" ref="1">
    <original>L</original>
    <variation>F</variation>
    <location>
        <position position="396"/>
    </location>
</feature>
<dbReference type="EC" id="3.2.1.51"/>
<dbReference type="EMBL" id="AK002230">
    <property type="protein sequence ID" value="BAB21949.1"/>
    <property type="molecule type" value="mRNA"/>
</dbReference>
<dbReference type="EMBL" id="AK053323">
    <property type="protein sequence ID" value="BAC35346.1"/>
    <property type="molecule type" value="mRNA"/>
</dbReference>
<dbReference type="EMBL" id="AK089958">
    <property type="protein sequence ID" value="BAC41012.1"/>
    <property type="molecule type" value="mRNA"/>
</dbReference>
<dbReference type="EMBL" id="AK151258">
    <property type="protein sequence ID" value="BAE30247.1"/>
    <property type="molecule type" value="mRNA"/>
</dbReference>
<dbReference type="EMBL" id="AK151361">
    <property type="protein sequence ID" value="BAE30336.1"/>
    <property type="molecule type" value="mRNA"/>
</dbReference>
<dbReference type="EMBL" id="AK151879">
    <property type="protein sequence ID" value="BAE30765.1"/>
    <property type="molecule type" value="mRNA"/>
</dbReference>
<dbReference type="EMBL" id="AK151908">
    <property type="protein sequence ID" value="BAE30789.1"/>
    <property type="molecule type" value="mRNA"/>
</dbReference>
<dbReference type="EMBL" id="AK165604">
    <property type="protein sequence ID" value="BAE38288.1"/>
    <property type="molecule type" value="mRNA"/>
</dbReference>
<dbReference type="EMBL" id="AL672076">
    <property type="status" value="NOT_ANNOTATED_CDS"/>
    <property type="molecule type" value="Genomic_DNA"/>
</dbReference>
<dbReference type="EMBL" id="BC003235">
    <property type="protein sequence ID" value="AAH03235.1"/>
    <property type="molecule type" value="mRNA"/>
</dbReference>
<dbReference type="CCDS" id="CCDS18794.1"/>
<dbReference type="RefSeq" id="NP_077205.3">
    <property type="nucleotide sequence ID" value="NM_024243.4"/>
</dbReference>
<dbReference type="SMR" id="Q99LJ1"/>
<dbReference type="FunCoup" id="Q99LJ1">
    <property type="interactions" value="719"/>
</dbReference>
<dbReference type="STRING" id="10090.ENSMUSP00000030434"/>
<dbReference type="CAZy" id="GH29">
    <property type="family name" value="Glycoside Hydrolase Family 29"/>
</dbReference>
<dbReference type="GlyCosmos" id="Q99LJ1">
    <property type="glycosylation" value="4 sites, No reported glycans"/>
</dbReference>
<dbReference type="GlyGen" id="Q99LJ1">
    <property type="glycosylation" value="5 sites"/>
</dbReference>
<dbReference type="iPTMnet" id="Q99LJ1"/>
<dbReference type="PhosphoSitePlus" id="Q99LJ1"/>
<dbReference type="jPOST" id="Q99LJ1"/>
<dbReference type="PaxDb" id="10090-ENSMUSP00000030434"/>
<dbReference type="ProteomicsDB" id="271642"/>
<dbReference type="Pumba" id="Q99LJ1"/>
<dbReference type="Antibodypedia" id="30233">
    <property type="antibodies" value="298 antibodies from 29 providers"/>
</dbReference>
<dbReference type="DNASU" id="71665"/>
<dbReference type="Ensembl" id="ENSMUST00000030434.5">
    <property type="protein sequence ID" value="ENSMUSP00000030434.5"/>
    <property type="gene ID" value="ENSMUSG00000028673.11"/>
</dbReference>
<dbReference type="GeneID" id="71665"/>
<dbReference type="KEGG" id="mmu:71665"/>
<dbReference type="UCSC" id="uc008vhi.2">
    <property type="organism name" value="mouse"/>
</dbReference>
<dbReference type="AGR" id="MGI:95593"/>
<dbReference type="CTD" id="2517"/>
<dbReference type="MGI" id="MGI:95593">
    <property type="gene designation" value="Fuca1"/>
</dbReference>
<dbReference type="VEuPathDB" id="HostDB:ENSMUSG00000028673"/>
<dbReference type="eggNOG" id="KOG3340">
    <property type="taxonomic scope" value="Eukaryota"/>
</dbReference>
<dbReference type="GeneTree" id="ENSGT00440000035378"/>
<dbReference type="HOGENOM" id="CLU_002934_1_1_1"/>
<dbReference type="InParanoid" id="Q99LJ1"/>
<dbReference type="OMA" id="LPEHKWE"/>
<dbReference type="OrthoDB" id="6039950at2759"/>
<dbReference type="PhylomeDB" id="Q99LJ1"/>
<dbReference type="TreeFam" id="TF313034"/>
<dbReference type="BRENDA" id="3.2.1.51">
    <property type="organism ID" value="3474"/>
</dbReference>
<dbReference type="Reactome" id="R-MMU-6798695">
    <property type="pathway name" value="Neutrophil degranulation"/>
</dbReference>
<dbReference type="Reactome" id="R-MMU-975578">
    <property type="pathway name" value="Reactions specific to the complex N-glycan synthesis pathway"/>
</dbReference>
<dbReference type="SABIO-RK" id="Q99LJ1"/>
<dbReference type="BioGRID-ORCS" id="71665">
    <property type="hits" value="3 hits in 79 CRISPR screens"/>
</dbReference>
<dbReference type="ChiTaRS" id="Fuca1">
    <property type="organism name" value="mouse"/>
</dbReference>
<dbReference type="PRO" id="PR:Q99LJ1"/>
<dbReference type="Proteomes" id="UP000000589">
    <property type="component" value="Chromosome 4"/>
</dbReference>
<dbReference type="RNAct" id="Q99LJ1">
    <property type="molecule type" value="protein"/>
</dbReference>
<dbReference type="Bgee" id="ENSMUSG00000028673">
    <property type="expression patterns" value="Expressed in prostate gland ventral lobe and 260 other cell types or tissues"/>
</dbReference>
<dbReference type="GO" id="GO:0005764">
    <property type="term" value="C:lysosome"/>
    <property type="evidence" value="ECO:0007669"/>
    <property type="project" value="UniProtKB-SubCell"/>
</dbReference>
<dbReference type="GO" id="GO:0004560">
    <property type="term" value="F:alpha-L-fucosidase activity"/>
    <property type="evidence" value="ECO:0007669"/>
    <property type="project" value="UniProtKB-EC"/>
</dbReference>
<dbReference type="GO" id="GO:0006004">
    <property type="term" value="P:fucose metabolic process"/>
    <property type="evidence" value="ECO:0007669"/>
    <property type="project" value="Ensembl"/>
</dbReference>
<dbReference type="GO" id="GO:0016139">
    <property type="term" value="P:glycoside catabolic process"/>
    <property type="evidence" value="ECO:0007669"/>
    <property type="project" value="Ensembl"/>
</dbReference>
<dbReference type="GO" id="GO:0006629">
    <property type="term" value="P:lipid metabolic process"/>
    <property type="evidence" value="ECO:0007669"/>
    <property type="project" value="UniProtKB-KW"/>
</dbReference>
<dbReference type="FunFam" id="2.60.40.1180:FF:000013">
    <property type="entry name" value="Alpha-L-fucosidase"/>
    <property type="match status" value="1"/>
</dbReference>
<dbReference type="FunFam" id="3.20.20.80:FF:000027">
    <property type="entry name" value="Alpha-L-fucosidase"/>
    <property type="match status" value="1"/>
</dbReference>
<dbReference type="Gene3D" id="3.20.20.80">
    <property type="entry name" value="Glycosidases"/>
    <property type="match status" value="1"/>
</dbReference>
<dbReference type="Gene3D" id="2.60.40.1180">
    <property type="entry name" value="Golgi alpha-mannosidase II"/>
    <property type="match status" value="1"/>
</dbReference>
<dbReference type="InterPro" id="IPR016286">
    <property type="entry name" value="FUC_metazoa-typ"/>
</dbReference>
<dbReference type="InterPro" id="IPR031919">
    <property type="entry name" value="Fucosidase_C"/>
</dbReference>
<dbReference type="InterPro" id="IPR000933">
    <property type="entry name" value="Glyco_hydro_29"/>
</dbReference>
<dbReference type="InterPro" id="IPR018526">
    <property type="entry name" value="Glyco_hydro_29_CS"/>
</dbReference>
<dbReference type="InterPro" id="IPR013780">
    <property type="entry name" value="Glyco_hydro_b"/>
</dbReference>
<dbReference type="InterPro" id="IPR017853">
    <property type="entry name" value="Glycoside_hydrolase_SF"/>
</dbReference>
<dbReference type="PANTHER" id="PTHR10030">
    <property type="entry name" value="ALPHA-L-FUCOSIDASE"/>
    <property type="match status" value="1"/>
</dbReference>
<dbReference type="PANTHER" id="PTHR10030:SF2">
    <property type="entry name" value="TISSUE ALPHA-L-FUCOSIDASE"/>
    <property type="match status" value="1"/>
</dbReference>
<dbReference type="Pfam" id="PF01120">
    <property type="entry name" value="Alpha_L_fucos"/>
    <property type="match status" value="1"/>
</dbReference>
<dbReference type="Pfam" id="PF16757">
    <property type="entry name" value="Fucosidase_C"/>
    <property type="match status" value="1"/>
</dbReference>
<dbReference type="PIRSF" id="PIRSF001092">
    <property type="entry name" value="Alpha-L-fucosidase"/>
    <property type="match status" value="1"/>
</dbReference>
<dbReference type="PRINTS" id="PR00741">
    <property type="entry name" value="GLHYDRLASE29"/>
</dbReference>
<dbReference type="SMART" id="SM00812">
    <property type="entry name" value="Alpha_L_fucos"/>
    <property type="match status" value="1"/>
</dbReference>
<dbReference type="SUPFAM" id="SSF51445">
    <property type="entry name" value="(Trans)glycosidases"/>
    <property type="match status" value="1"/>
</dbReference>
<dbReference type="PROSITE" id="PS00385">
    <property type="entry name" value="ALPHA_L_FUCOSIDASE"/>
    <property type="match status" value="1"/>
</dbReference>
<accession>Q99LJ1</accession>
<accession>B1AV51</accession>
<accession>Q3UAH8</accession>
<accession>Q8BN13</accession>
<accession>Q9DD22</accession>
<keyword id="KW-0325">Glycoprotein</keyword>
<keyword id="KW-0326">Glycosidase</keyword>
<keyword id="KW-0378">Hydrolase</keyword>
<keyword id="KW-0443">Lipid metabolism</keyword>
<keyword id="KW-0458">Lysosome</keyword>
<keyword id="KW-1185">Reference proteome</keyword>
<keyword id="KW-0732">Signal</keyword>
<evidence type="ECO:0000250" key="1"/>
<evidence type="ECO:0000250" key="2">
    <source>
        <dbReference type="UniProtKB" id="P04066"/>
    </source>
</evidence>
<evidence type="ECO:0000255" key="3"/>
<evidence type="ECO:0000255" key="4">
    <source>
        <dbReference type="PROSITE-ProRule" id="PRU10054"/>
    </source>
</evidence>
<evidence type="ECO:0000305" key="5"/>
<name>FUCO_MOUSE</name>
<protein>
    <recommendedName>
        <fullName>Tissue alpha-L-fucosidase</fullName>
        <ecNumber>3.2.1.51</ecNumber>
    </recommendedName>
    <alternativeName>
        <fullName>Alpha-L-fucosidase I</fullName>
    </alternativeName>
    <alternativeName>
        <fullName>Alpha-L-fucoside fucohydrolase 1</fullName>
        <shortName>Alpha-L-fucosidase 1</shortName>
    </alternativeName>
</protein>
<proteinExistence type="evidence at protein level"/>